<proteinExistence type="inferred from homology"/>
<sequence>MVEVPSFRSNEHFPQLCDKVTVKWDKKRGRFVEAIEDIPIGTVVCVETGITVNVDPQNCYRCLKITENASFAYCKNCEEFYEPDEIACGEFDELGIFKLAAHLVFSYPFADIASLVQSSDPEPPSCAPKALSTQDIEAIFQLTPFPEIGEAFKAPAIQNAIKRIVESLETDENWGRLDQISRTMTFTKALRIMAERSAKNAHTIYSIEQIESQEDNLPMATGLFPISSIFNHSCTPNISGFFVRNTFIFVSQGVRAREELLDSYGVTYHQHTFEQRTNFLASVSGFICHCESCFKMKSLKVLEKPKKYPETIATNASCFTDITSYTENIPRGSKELENLIIAFARRPDSETYTELIFQFWKKFVENAKFRGITYDPYLVRPYVEMTILAWNKEVGCENEEKMSLLIVTHRLLRNCYVDLHPLSELVVKLVNVVANQNADEINRTLEKLKLRARMLWKYSEQSEDL</sequence>
<keyword id="KW-0025">Alternative splicing</keyword>
<keyword id="KW-0489">Methyltransferase</keyword>
<keyword id="KW-1185">Reference proteome</keyword>
<keyword id="KW-0949">S-adenosyl-L-methionine</keyword>
<keyword id="KW-0808">Transferase</keyword>
<name>SET3_CAEEL</name>
<reference key="1">
    <citation type="journal article" date="1994" name="Nature">
        <title>2.2 Mb of contiguous nucleotide sequence from chromosome III of C. elegans.</title>
        <authorList>
            <person name="Wilson R."/>
            <person name="Ainscough R."/>
            <person name="Anderson K."/>
            <person name="Baynes C."/>
            <person name="Berks M."/>
            <person name="Bonfield J."/>
            <person name="Burton J."/>
            <person name="Connell M."/>
            <person name="Copsey T."/>
            <person name="Cooper J."/>
            <person name="Coulson A."/>
            <person name="Craxton M."/>
            <person name="Dear S."/>
            <person name="Du Z."/>
            <person name="Durbin R."/>
            <person name="Favello A."/>
            <person name="Fraser A."/>
            <person name="Fulton L."/>
            <person name="Gardner A."/>
            <person name="Green P."/>
            <person name="Hawkins T."/>
            <person name="Hillier L."/>
            <person name="Jier M."/>
            <person name="Johnston L."/>
            <person name="Jones M."/>
            <person name="Kershaw J."/>
            <person name="Kirsten J."/>
            <person name="Laisster N."/>
            <person name="Latreille P."/>
            <person name="Lightning J."/>
            <person name="Lloyd C."/>
            <person name="Mortimore B."/>
            <person name="O'Callaghan M."/>
            <person name="Parsons J."/>
            <person name="Percy C."/>
            <person name="Rifken L."/>
            <person name="Roopra A."/>
            <person name="Saunders D."/>
            <person name="Shownkeen R."/>
            <person name="Sims M."/>
            <person name="Smaldon N."/>
            <person name="Smith A."/>
            <person name="Smith M."/>
            <person name="Sonnhammer E."/>
            <person name="Staden R."/>
            <person name="Sulston J."/>
            <person name="Thierry-Mieg J."/>
            <person name="Thomas K."/>
            <person name="Vaudin M."/>
            <person name="Vaughan K."/>
            <person name="Waterston R."/>
            <person name="Watson A."/>
            <person name="Weinstock L."/>
            <person name="Wilkinson-Sproat J."/>
            <person name="Wohldman P."/>
        </authorList>
    </citation>
    <scope>NUCLEOTIDE SEQUENCE [LARGE SCALE GENOMIC DNA]</scope>
    <source>
        <strain>Bristol N2</strain>
    </source>
</reference>
<reference key="2">
    <citation type="journal article" date="1998" name="Science">
        <title>Genome sequence of the nematode C. elegans: a platform for investigating biology.</title>
        <authorList>
            <consortium name="The C. elegans sequencing consortium"/>
        </authorList>
    </citation>
    <scope>NUCLEOTIDE SEQUENCE [LARGE SCALE GENOMIC DNA]</scope>
    <scope>ALTERNATIVE SPLICING</scope>
    <source>
        <strain>Bristol N2</strain>
    </source>
</reference>
<feature type="chain" id="PRO_0000065163" description="SET domain-containing protein 3">
    <location>
        <begin position="1"/>
        <end position="465"/>
    </location>
</feature>
<feature type="domain" description="SET" evidence="1">
    <location>
        <begin position="18"/>
        <end position="265"/>
    </location>
</feature>
<feature type="splice variant" id="VSP_015956" description="In isoform b." evidence="2">
    <original>LVVKLVNVVANQNADEINRTLEKLKLRARMLWKYSEQSEDL</original>
    <variation>YVRYYGDAEKNFGSSSNSSMSLPIRMLTKLTER</variation>
    <location>
        <begin position="425"/>
        <end position="465"/>
    </location>
</feature>
<organism>
    <name type="scientific">Caenorhabditis elegans</name>
    <dbReference type="NCBI Taxonomy" id="6239"/>
    <lineage>
        <taxon>Eukaryota</taxon>
        <taxon>Metazoa</taxon>
        <taxon>Ecdysozoa</taxon>
        <taxon>Nematoda</taxon>
        <taxon>Chromadorea</taxon>
        <taxon>Rhabditida</taxon>
        <taxon>Rhabditina</taxon>
        <taxon>Rhabditomorpha</taxon>
        <taxon>Rhabditoidea</taxon>
        <taxon>Rhabditidae</taxon>
        <taxon>Peloderinae</taxon>
        <taxon>Caenorhabditis</taxon>
    </lineage>
</organism>
<evidence type="ECO:0000255" key="1">
    <source>
        <dbReference type="PROSITE-ProRule" id="PRU00190"/>
    </source>
</evidence>
<evidence type="ECO:0000305" key="2"/>
<accession>P34318</accession>
<accession>Q8I4M9</accession>
<gene>
    <name type="primary">set-3</name>
    <name type="ORF">C07A9.7</name>
</gene>
<comment type="alternative products">
    <event type="alternative splicing"/>
    <isoform>
        <id>P34318-1</id>
        <name>a</name>
        <sequence type="displayed"/>
    </isoform>
    <isoform>
        <id>P34318-2</id>
        <name>b</name>
        <sequence type="described" ref="VSP_015956"/>
    </isoform>
</comment>
<comment type="similarity">
    <text evidence="1">Belongs to the class V-like SAM-binding methyltransferase superfamily.</text>
</comment>
<dbReference type="EC" id="2.1.1.-"/>
<dbReference type="EMBL" id="Z29094">
    <property type="protein sequence ID" value="CAA82336.1"/>
    <property type="molecule type" value="Genomic_DNA"/>
</dbReference>
<dbReference type="EMBL" id="Z29094">
    <property type="protein sequence ID" value="CAD45581.1"/>
    <property type="molecule type" value="Genomic_DNA"/>
</dbReference>
<dbReference type="PIR" id="S40701">
    <property type="entry name" value="S40701"/>
</dbReference>
<dbReference type="RefSeq" id="NP_499143.1">
    <molecule id="P34318-1"/>
    <property type="nucleotide sequence ID" value="NM_066742.6"/>
</dbReference>
<dbReference type="RefSeq" id="NP_871669.1">
    <molecule id="P34318-2"/>
    <property type="nucleotide sequence ID" value="NM_181940.6"/>
</dbReference>
<dbReference type="BioGRID" id="47209">
    <property type="interactions" value="2"/>
</dbReference>
<dbReference type="FunCoup" id="P34318">
    <property type="interactions" value="115"/>
</dbReference>
<dbReference type="IntAct" id="P34318">
    <property type="interactions" value="1"/>
</dbReference>
<dbReference type="STRING" id="6239.C07A9.7a.1"/>
<dbReference type="PaxDb" id="6239-C07A9.7a"/>
<dbReference type="PeptideAtlas" id="P34318"/>
<dbReference type="EnsemblMetazoa" id="C07A9.7a.1">
    <molecule id="P34318-1"/>
    <property type="protein sequence ID" value="C07A9.7a.1"/>
    <property type="gene ID" value="WBGene00007403"/>
</dbReference>
<dbReference type="EnsemblMetazoa" id="C07A9.7b.1">
    <molecule id="P34318-2"/>
    <property type="protein sequence ID" value="C07A9.7b.1"/>
    <property type="gene ID" value="WBGene00007403"/>
</dbReference>
<dbReference type="GeneID" id="182356"/>
<dbReference type="KEGG" id="cel:CELE_C07A9.7"/>
<dbReference type="AGR" id="WB:WBGene00007403"/>
<dbReference type="CTD" id="182356"/>
<dbReference type="WormBase" id="C07A9.7a">
    <molecule id="P34318-1"/>
    <property type="protein sequence ID" value="CE00498"/>
    <property type="gene ID" value="WBGene00007403"/>
    <property type="gene designation" value="set-3"/>
</dbReference>
<dbReference type="WormBase" id="C07A9.7b">
    <molecule id="P34318-2"/>
    <property type="protein sequence ID" value="CE31769"/>
    <property type="gene ID" value="WBGene00007403"/>
    <property type="gene designation" value="set-3"/>
</dbReference>
<dbReference type="eggNOG" id="KOG2084">
    <property type="taxonomic scope" value="Eukaryota"/>
</dbReference>
<dbReference type="HOGENOM" id="CLU_619999_0_0_1"/>
<dbReference type="InParanoid" id="P34318"/>
<dbReference type="OMA" id="KNAHTIY"/>
<dbReference type="OrthoDB" id="1028014at2759"/>
<dbReference type="PhylomeDB" id="P34318"/>
<dbReference type="PRO" id="PR:P34318"/>
<dbReference type="Proteomes" id="UP000001940">
    <property type="component" value="Chromosome III"/>
</dbReference>
<dbReference type="Bgee" id="WBGene00007403">
    <property type="expression patterns" value="Expressed in germ line (C elegans) and 11 other cell types or tissues"/>
</dbReference>
<dbReference type="GO" id="GO:0008168">
    <property type="term" value="F:methyltransferase activity"/>
    <property type="evidence" value="ECO:0007669"/>
    <property type="project" value="UniProtKB-KW"/>
</dbReference>
<dbReference type="GO" id="GO:0032259">
    <property type="term" value="P:methylation"/>
    <property type="evidence" value="ECO:0007669"/>
    <property type="project" value="UniProtKB-KW"/>
</dbReference>
<dbReference type="CDD" id="cd10536">
    <property type="entry name" value="SET_SMYD4"/>
    <property type="match status" value="1"/>
</dbReference>
<dbReference type="Gene3D" id="2.170.270.10">
    <property type="entry name" value="SET domain"/>
    <property type="match status" value="1"/>
</dbReference>
<dbReference type="InterPro" id="IPR052097">
    <property type="entry name" value="SET-MYND_domain_protein"/>
</dbReference>
<dbReference type="InterPro" id="IPR001214">
    <property type="entry name" value="SET_dom"/>
</dbReference>
<dbReference type="InterPro" id="IPR046341">
    <property type="entry name" value="SET_dom_sf"/>
</dbReference>
<dbReference type="InterPro" id="IPR044421">
    <property type="entry name" value="SMYD4_SET"/>
</dbReference>
<dbReference type="PANTHER" id="PTHR46165">
    <property type="entry name" value="SET AND MYND DOMAIN-CONTAINING PROTEIN 4"/>
    <property type="match status" value="1"/>
</dbReference>
<dbReference type="PANTHER" id="PTHR46165:SF6">
    <property type="entry name" value="SET AND MYND DOMAIN-CONTAINING PROTEIN 4-LIKE PROTEIN"/>
    <property type="match status" value="1"/>
</dbReference>
<dbReference type="Pfam" id="PF00856">
    <property type="entry name" value="SET"/>
    <property type="match status" value="1"/>
</dbReference>
<dbReference type="SMART" id="SM00317">
    <property type="entry name" value="SET"/>
    <property type="match status" value="1"/>
</dbReference>
<dbReference type="SUPFAM" id="SSF82199">
    <property type="entry name" value="SET domain"/>
    <property type="match status" value="1"/>
</dbReference>
<dbReference type="PROSITE" id="PS50280">
    <property type="entry name" value="SET"/>
    <property type="match status" value="1"/>
</dbReference>
<protein>
    <recommendedName>
        <fullName>SET domain-containing protein 3</fullName>
        <ecNumber>2.1.1.-</ecNumber>
    </recommendedName>
</protein>